<reference key="1">
    <citation type="journal article" date="2004" name="DNA Res.">
        <title>Complete nucleotide sequence of the sugarcane (Saccharum officinarum) chloroplast genome: a comparative analysis of four monocot chloroplast genomes.</title>
        <authorList>
            <person name="Asano T."/>
            <person name="Tsudzuki T."/>
            <person name="Takahashi S."/>
            <person name="Shimada H."/>
            <person name="Kadowaki K."/>
        </authorList>
    </citation>
    <scope>NUCLEOTIDE SEQUENCE [LARGE SCALE GENOMIC DNA]</scope>
</reference>
<evidence type="ECO:0000250" key="1"/>
<evidence type="ECO:0000255" key="2">
    <source>
        <dbReference type="HAMAP-Rule" id="MF_01390"/>
    </source>
</evidence>
<evidence type="ECO:0000305" key="3"/>
<keyword id="KW-0150">Chloroplast</keyword>
<keyword id="KW-0507">mRNA processing</keyword>
<keyword id="KW-0934">Plastid</keyword>
<keyword id="KW-0691">RNA editing</keyword>
<keyword id="KW-0694">RNA-binding</keyword>
<keyword id="KW-0819">tRNA processing</keyword>
<name>MATK_SACOF</name>
<protein>
    <recommendedName>
        <fullName evidence="2">Maturase K</fullName>
    </recommendedName>
    <alternativeName>
        <fullName evidence="2">Intron maturase</fullName>
    </alternativeName>
</protein>
<dbReference type="EMBL" id="AP006714">
    <property type="protein sequence ID" value="BAD27271.1"/>
    <property type="status" value="ALT_SEQ"/>
    <property type="molecule type" value="Genomic_DNA"/>
</dbReference>
<dbReference type="GO" id="GO:0009507">
    <property type="term" value="C:chloroplast"/>
    <property type="evidence" value="ECO:0007669"/>
    <property type="project" value="UniProtKB-SubCell"/>
</dbReference>
<dbReference type="GO" id="GO:0003723">
    <property type="term" value="F:RNA binding"/>
    <property type="evidence" value="ECO:0007669"/>
    <property type="project" value="UniProtKB-KW"/>
</dbReference>
<dbReference type="GO" id="GO:0006397">
    <property type="term" value="P:mRNA processing"/>
    <property type="evidence" value="ECO:0007669"/>
    <property type="project" value="UniProtKB-KW"/>
</dbReference>
<dbReference type="GO" id="GO:0008380">
    <property type="term" value="P:RNA splicing"/>
    <property type="evidence" value="ECO:0007669"/>
    <property type="project" value="UniProtKB-UniRule"/>
</dbReference>
<dbReference type="GO" id="GO:0008033">
    <property type="term" value="P:tRNA processing"/>
    <property type="evidence" value="ECO:0007669"/>
    <property type="project" value="UniProtKB-KW"/>
</dbReference>
<dbReference type="HAMAP" id="MF_01390">
    <property type="entry name" value="MatK"/>
    <property type="match status" value="1"/>
</dbReference>
<dbReference type="InterPro" id="IPR024937">
    <property type="entry name" value="Domain_X"/>
</dbReference>
<dbReference type="InterPro" id="IPR002866">
    <property type="entry name" value="Maturase_MatK"/>
</dbReference>
<dbReference type="InterPro" id="IPR024942">
    <property type="entry name" value="Maturase_MatK_N"/>
</dbReference>
<dbReference type="PANTHER" id="PTHR34811">
    <property type="entry name" value="MATURASE K"/>
    <property type="match status" value="1"/>
</dbReference>
<dbReference type="PANTHER" id="PTHR34811:SF1">
    <property type="entry name" value="MATURASE K"/>
    <property type="match status" value="1"/>
</dbReference>
<dbReference type="Pfam" id="PF01348">
    <property type="entry name" value="Intron_maturas2"/>
    <property type="match status" value="1"/>
</dbReference>
<dbReference type="Pfam" id="PF01824">
    <property type="entry name" value="MatK_N"/>
    <property type="match status" value="1"/>
</dbReference>
<geneLocation type="chloroplast"/>
<sequence length="513" mass="61285">MQKFEGYSEKQKSRQHYFVYPLLFQEYIYAFAHDYGLNGSEPVEIFGCNNKKFSSILVKRLIIRMYQQNFLINSVNYPNQDRLFDHRNYFYSEFYSQILSEGFGIVVEIPLSLGQLSCPEEKEIPKFQNLQSIHSIFPFLEDKFLHLHYLSHIEIPYPIHLEILVQLLEYRIQDVPSLHLLRFFLHYYSNWNSLITSMKSIFLLKKENQRLFRFLYNSYVSEYEFFLLFLRKQSSCLRLTSSGTFLERIIFSGKMEHFGVMYPGFFRKTIWFFMDPLMHYVRYQGKAILASKGTLLLKKKWKSYLVNFSQYFFYFWTQPQRIRLNQLTNSCFDFLGYLSSVPINTLLVRNQMLENSFLIDTRMKKFNTTVPATPLVGSLSKAQFCTGSGHPISKPVWTDLSDWDILDRFGRICRNLFHYYSGSSKKQTLYRLKYILRLSCARTLARKHKSTVRTFMQRLGSVFLEEFFTEEEQVFSLMFTKTIHFSFHGSQSERIWYLDIIRINDLVNPLTLN</sequence>
<accession>Q6ENX8</accession>
<comment type="function">
    <text evidence="2">Usually encoded in the trnK tRNA gene intron. Probably assists in splicing its own and other chloroplast group II introns.</text>
</comment>
<comment type="subcellular location">
    <subcellularLocation>
        <location>Plastid</location>
        <location>Chloroplast</location>
    </subcellularLocation>
</comment>
<comment type="RNA editing">
    <location>
        <position position="420" evidence="1"/>
    </location>
</comment>
<comment type="similarity">
    <text evidence="2">Belongs to the intron maturase 2 family. MatK subfamily.</text>
</comment>
<comment type="sequence caution" evidence="3">
    <conflict type="erroneous initiation">
        <sequence resource="EMBL-CDS" id="BAD27271"/>
    </conflict>
    <text>Extended N-terminus.</text>
</comment>
<gene>
    <name evidence="2" type="primary">matK</name>
</gene>
<proteinExistence type="inferred from homology"/>
<organism>
    <name type="scientific">Saccharum officinarum</name>
    <name type="common">Sugarcane</name>
    <dbReference type="NCBI Taxonomy" id="4547"/>
    <lineage>
        <taxon>Eukaryota</taxon>
        <taxon>Viridiplantae</taxon>
        <taxon>Streptophyta</taxon>
        <taxon>Embryophyta</taxon>
        <taxon>Tracheophyta</taxon>
        <taxon>Spermatophyta</taxon>
        <taxon>Magnoliopsida</taxon>
        <taxon>Liliopsida</taxon>
        <taxon>Poales</taxon>
        <taxon>Poaceae</taxon>
        <taxon>PACMAD clade</taxon>
        <taxon>Panicoideae</taxon>
        <taxon>Andropogonodae</taxon>
        <taxon>Andropogoneae</taxon>
        <taxon>Saccharinae</taxon>
        <taxon>Saccharum</taxon>
        <taxon>Saccharum officinarum species complex</taxon>
    </lineage>
</organism>
<feature type="chain" id="PRO_0000143695" description="Maturase K">
    <location>
        <begin position="1"/>
        <end position="513"/>
    </location>
</feature>